<reference key="1">
    <citation type="journal article" date="1988" name="J. Gen. Virol.">
        <title>Comparative sequence analysis of the genomic segment 6 of four rotaviruses each with a different subgroup specificity.</title>
        <authorList>
            <person name="Gorziglia M."/>
            <person name="Hoshino Y."/>
            <person name="Nishikawa K."/>
            <person name="Maloy W.L."/>
            <person name="Jones R.W."/>
            <person name="Kapikian A.Z."/>
            <person name="Chanock R.M."/>
        </authorList>
    </citation>
    <scope>NUCLEOTIDE SEQUENCE [MRNA]</scope>
</reference>
<organism>
    <name type="scientific">Rotavirus A (isolate RVA/Equine/United Kingdom/H2/1976/G3P4[12])</name>
    <name type="common">RV-A</name>
    <name type="synonym">Rotavirus A (isolate H-2)</name>
    <dbReference type="NCBI Taxonomy" id="10939"/>
    <lineage>
        <taxon>Viruses</taxon>
        <taxon>Riboviria</taxon>
        <taxon>Orthornavirae</taxon>
        <taxon>Duplornaviricota</taxon>
        <taxon>Resentoviricetes</taxon>
        <taxon>Reovirales</taxon>
        <taxon>Sedoreoviridae</taxon>
        <taxon>Rotavirus</taxon>
        <taxon>Equine rotavirus</taxon>
    </lineage>
</organism>
<evidence type="ECO:0000255" key="1">
    <source>
        <dbReference type="HAMAP-Rule" id="MF_04129"/>
    </source>
</evidence>
<proteinExistence type="evidence at transcript level"/>
<protein>
    <recommendedName>
        <fullName evidence="1">Intermediate capsid protein VP6</fullName>
    </recommendedName>
</protein>
<sequence>MDVLYSLSKTLKDARDKIVEGTLYSNVSDLIQQFNQMVITMNGNEFQTGGIGNLPIRNWNFDFGLLGTTLLNLDANYVETARNTIDYFVDFVDNVCMDEMVRESQRNGIAPQSDSLRKLSGIKFKRINFDNSSEYIENWNLQNRRQRKGFTFHKPNIFPYSASFTLNRSQPAHDNLMGTMWLNAGSEIQVAGFDYSCAINAPANTQQFEHIVQLRRVLTTATITLLPDAERFSFPRVINSADGTTTWYFNPVIFRPNNVEIEFLLNGQIINNYQARFGTIIARNFDTIRLSFQLMRPPPQNMTPAVAALFPNAPPFEHHATVGLTLRIESAICESVLADASETMLANVTSVRQEYAVPVGPVFPPGMNWTDLITNYSPSREDNLQRVFTVASIRSMLIK</sequence>
<dbReference type="EMBL" id="D00324">
    <property type="protein sequence ID" value="BAA00236.1"/>
    <property type="molecule type" value="mRNA"/>
</dbReference>
<dbReference type="SMR" id="P16488"/>
<dbReference type="GO" id="GO:0019031">
    <property type="term" value="C:viral envelope"/>
    <property type="evidence" value="ECO:0007669"/>
    <property type="project" value="UniProtKB-UniRule"/>
</dbReference>
<dbReference type="GO" id="GO:0039626">
    <property type="term" value="C:viral intermediate capsid"/>
    <property type="evidence" value="ECO:0007669"/>
    <property type="project" value="UniProtKB-UniRule"/>
</dbReference>
<dbReference type="GO" id="GO:0046789">
    <property type="term" value="F:host cell surface receptor binding"/>
    <property type="evidence" value="ECO:0007669"/>
    <property type="project" value="UniProtKB-UniRule"/>
</dbReference>
<dbReference type="GO" id="GO:0046872">
    <property type="term" value="F:metal ion binding"/>
    <property type="evidence" value="ECO:0007669"/>
    <property type="project" value="UniProtKB-UniRule"/>
</dbReference>
<dbReference type="GO" id="GO:0005198">
    <property type="term" value="F:structural molecule activity"/>
    <property type="evidence" value="ECO:0007669"/>
    <property type="project" value="UniProtKB-UniRule"/>
</dbReference>
<dbReference type="GO" id="GO:0019064">
    <property type="term" value="P:fusion of virus membrane with host plasma membrane"/>
    <property type="evidence" value="ECO:0007669"/>
    <property type="project" value="UniProtKB-UniRule"/>
</dbReference>
<dbReference type="FunFam" id="2.60.120.170:FF:000001">
    <property type="entry name" value="Intermediate capsid protein VP6"/>
    <property type="match status" value="1"/>
</dbReference>
<dbReference type="Gene3D" id="2.60.120.170">
    <property type="match status" value="1"/>
</dbReference>
<dbReference type="Gene3D" id="1.10.1350.10">
    <property type="entry name" value="Viral capsid alpha domain"/>
    <property type="match status" value="1"/>
</dbReference>
<dbReference type="HAMAP" id="MF_04126">
    <property type="entry name" value="Rota_VP6"/>
    <property type="match status" value="1"/>
</dbReference>
<dbReference type="HAMAP" id="MF_04129">
    <property type="entry name" value="Rota_VP6_A"/>
    <property type="match status" value="1"/>
</dbReference>
<dbReference type="InterPro" id="IPR008980">
    <property type="entry name" value="Capsid_hemagglutn"/>
</dbReference>
<dbReference type="InterPro" id="IPR001385">
    <property type="entry name" value="Rotavirus_A/C_VP6"/>
</dbReference>
<dbReference type="InterPro" id="IPR008935">
    <property type="entry name" value="Virus_capsid_a-hlx_vir"/>
</dbReference>
<dbReference type="Pfam" id="PF00980">
    <property type="entry name" value="Rota_Capsid_VP6"/>
    <property type="match status" value="1"/>
</dbReference>
<dbReference type="SUPFAM" id="SSF48345">
    <property type="entry name" value="A virus capsid protein alpha-helical domain"/>
    <property type="match status" value="1"/>
</dbReference>
<dbReference type="SUPFAM" id="SSF49818">
    <property type="entry name" value="Viral protein domain"/>
    <property type="match status" value="1"/>
</dbReference>
<feature type="chain" id="PRO_0000149565" description="Intermediate capsid protein VP6">
    <location>
        <begin position="1"/>
        <end position="399"/>
    </location>
</feature>
<feature type="region of interest" description="Interaction with the inner capsid protein VP2" evidence="1">
    <location>
        <begin position="62"/>
        <end position="73"/>
    </location>
</feature>
<feature type="binding site" evidence="1">
    <location>
        <position position="153"/>
    </location>
    <ligand>
        <name>Zn(2+)</name>
        <dbReference type="ChEBI" id="CHEBI:29105"/>
        <note>ligand shared between all trimeric partners</note>
    </ligand>
</feature>
<feature type="binding site" evidence="1">
    <location>
        <position position="266"/>
    </location>
    <ligand>
        <name>Ca(2+)</name>
        <dbReference type="ChEBI" id="CHEBI:29108"/>
    </ligand>
</feature>
<feature type="binding site" evidence="1">
    <location>
        <position position="286"/>
    </location>
    <ligand>
        <name>Ca(2+)</name>
        <dbReference type="ChEBI" id="CHEBI:29108"/>
    </ligand>
</feature>
<organismHost>
    <name type="scientific">Equus caballus</name>
    <name type="common">Horse</name>
    <dbReference type="NCBI Taxonomy" id="9796"/>
</organismHost>
<accession>P16488</accession>
<comment type="function">
    <text evidence="1">Intermediate capsid protein that self assembles to form an icosahedral capsid with a T=13 symmetry, which consists of 230 trimers of VP6, with channels at each of its five-fold vertices. This capsid constitutes the middle concentric layer of the viral mature particle. The innermost VP2 capsid and the intermediate VP6 capsid remain intact following cell entry to protect the dsRNA from degradation and to prevent unfavorable antiviral responses in the host cell during all the replication cycle of the virus. Nascent transcripts are transcribed within the structural confines of this double-layered particle (DLP) and are extruded through the channels at the five-fold axes. VP6 is required for the transcription activity of the DLP.</text>
</comment>
<comment type="subunit">
    <text evidence="1">Homotrimer. Interacts with the inner capsid protein VP2. Interacts with the outer capsid glycoprotein VP7. Interacts with the outer capsid protein VP5*.</text>
</comment>
<comment type="subcellular location">
    <subcellularLocation>
        <location evidence="1">Virion</location>
    </subcellularLocation>
    <text evidence="1">Component of the intermediate capsid. Also found in spherical cytoplasmic structures, called virus factories, that appear early after infection and are the site of viral replication and packaging.</text>
</comment>
<comment type="PTM">
    <text evidence="1">The N-terminus is blocked.</text>
</comment>
<comment type="PTM">
    <text evidence="1">Sumoylated with SUMO1 and SUMO2. Sumoylation of viral proteins seems to have a positive role on viral replication.</text>
</comment>
<comment type="miscellaneous">
    <text evidence="1">The VP6 trimer contains a zinc ion located at the center of the molecule. The zinc ion is not essential for either trimerization or transcription activity of the DLP. Zinc-depleted VP6 has an increased sensitivity to proteases.</text>
</comment>
<comment type="similarity">
    <text evidence="1">Belongs to the rotavirus VP6 family.</text>
</comment>
<name>VP6_ROTEH</name>
<keyword id="KW-0106">Calcium</keyword>
<keyword id="KW-0167">Capsid protein</keyword>
<keyword id="KW-1154">Intermediate capsid protein</keyword>
<keyword id="KW-0479">Metal-binding</keyword>
<keyword id="KW-0832">Ubl conjugation</keyword>
<keyword id="KW-0946">Virion</keyword>
<keyword id="KW-0862">Zinc</keyword>